<name>DBFB_SPHPI</name>
<comment type="function">
    <text>Responsible for meta-cleavage of the first aromatic ring of 2,2',3-trihydroxybiphenyl and 2,3-dihydroxybiphenyl. 2,2',3-trihydroxydiphenyl ether, catechol, 3-methylcatechol, and 4-methylcatechol are oxidized less efficiently and 3,4-dihydroxybiphenyl is oxidized considerably less efficiently.</text>
</comment>
<comment type="cofactor">
    <cofactor>
        <name>Fe(2+)</name>
        <dbReference type="ChEBI" id="CHEBI:29033"/>
    </cofactor>
</comment>
<comment type="pathway">
    <text>Xenobiotic degradation; dibenzo-p-dioxin degradation; 2-hydroxymuconate and catechol from dibenzo-p-dioxin: step 2/3.</text>
</comment>
<comment type="pathway">
    <text>Xenobiotic degradation; dibenzofuran degradation; 2-hydroxy-2,4-pentadienoate and salicylate from dibenzofuran: step 2/3.</text>
</comment>
<comment type="subunit">
    <text>Monomer.</text>
</comment>
<comment type="similarity">
    <text evidence="4">Belongs to the extradiol ring-cleavage dioxygenase family.</text>
</comment>
<keyword id="KW-0058">Aromatic hydrocarbons catabolism</keyword>
<keyword id="KW-0223">Dioxygenase</keyword>
<keyword id="KW-0903">Direct protein sequencing</keyword>
<keyword id="KW-0408">Iron</keyword>
<keyword id="KW-0479">Metal-binding</keyword>
<keyword id="KW-0560">Oxidoreductase</keyword>
<keyword id="KW-0677">Repeat</keyword>
<feature type="initiator methionine" description="Removed" evidence="3">
    <location>
        <position position="1"/>
    </location>
</feature>
<feature type="chain" id="PRO_0000085041" description="2,2',3-trihydroxybiphenyl dioxygenase">
    <location>
        <begin position="2"/>
        <end position="294"/>
    </location>
</feature>
<feature type="domain" description="VOC 1" evidence="2">
    <location>
        <begin position="7"/>
        <end position="120"/>
    </location>
</feature>
<feature type="domain" description="VOC 2" evidence="2">
    <location>
        <begin position="144"/>
        <end position="264"/>
    </location>
</feature>
<feature type="binding site" evidence="1">
    <location>
        <position position="147"/>
    </location>
    <ligand>
        <name>Fe cation</name>
        <dbReference type="ChEBI" id="CHEBI:24875"/>
    </ligand>
</feature>
<feature type="binding site" evidence="1">
    <location>
        <position position="209"/>
    </location>
    <ligand>
        <name>Fe cation</name>
        <dbReference type="ChEBI" id="CHEBI:24875"/>
    </ligand>
</feature>
<feature type="binding site" evidence="1">
    <location>
        <position position="260"/>
    </location>
    <ligand>
        <name>Fe cation</name>
        <dbReference type="ChEBI" id="CHEBI:24875"/>
    </ligand>
</feature>
<dbReference type="EC" id="1.13.11.-"/>
<dbReference type="EMBL" id="X72850">
    <property type="protein sequence ID" value="CAA51364.1"/>
    <property type="molecule type" value="Genomic_DNA"/>
</dbReference>
<dbReference type="SMR" id="P47243"/>
<dbReference type="UniPathway" id="UPA00808">
    <property type="reaction ID" value="UER00777"/>
</dbReference>
<dbReference type="UniPathway" id="UPA00809">
    <property type="reaction ID" value="UER00780"/>
</dbReference>
<dbReference type="GO" id="GO:0051213">
    <property type="term" value="F:dioxygenase activity"/>
    <property type="evidence" value="ECO:0007669"/>
    <property type="project" value="UniProtKB-KW"/>
</dbReference>
<dbReference type="GO" id="GO:0008198">
    <property type="term" value="F:ferrous iron binding"/>
    <property type="evidence" value="ECO:0007669"/>
    <property type="project" value="InterPro"/>
</dbReference>
<dbReference type="GO" id="GO:0019341">
    <property type="term" value="P:dibenzo-p-dioxin catabolic process"/>
    <property type="evidence" value="ECO:0007669"/>
    <property type="project" value="UniProtKB-UniPathway"/>
</dbReference>
<dbReference type="GO" id="GO:0019340">
    <property type="term" value="P:dibenzofuran catabolic process"/>
    <property type="evidence" value="ECO:0007669"/>
    <property type="project" value="UniProtKB-UniPathway"/>
</dbReference>
<dbReference type="CDD" id="cd07237">
    <property type="entry name" value="BphC1-RGP6_C_like"/>
    <property type="match status" value="1"/>
</dbReference>
<dbReference type="CDD" id="cd07252">
    <property type="entry name" value="BphC1-RGP6_N_like"/>
    <property type="match status" value="1"/>
</dbReference>
<dbReference type="Gene3D" id="3.10.180.10">
    <property type="entry name" value="2,3-Dihydroxybiphenyl 1,2-Dioxygenase, domain 1"/>
    <property type="match status" value="2"/>
</dbReference>
<dbReference type="InterPro" id="IPR029068">
    <property type="entry name" value="Glyas_Bleomycin-R_OHBP_Dase"/>
</dbReference>
<dbReference type="InterPro" id="IPR004360">
    <property type="entry name" value="Glyas_Fos-R_dOase_dom"/>
</dbReference>
<dbReference type="InterPro" id="IPR037523">
    <property type="entry name" value="VOC"/>
</dbReference>
<dbReference type="InterPro" id="IPR000486">
    <property type="entry name" value="Xdiol_ring_cleave_dOase_1/2"/>
</dbReference>
<dbReference type="Pfam" id="PF00903">
    <property type="entry name" value="Glyoxalase"/>
    <property type="match status" value="1"/>
</dbReference>
<dbReference type="SUPFAM" id="SSF54593">
    <property type="entry name" value="Glyoxalase/Bleomycin resistance protein/Dihydroxybiphenyl dioxygenase"/>
    <property type="match status" value="2"/>
</dbReference>
<dbReference type="PROSITE" id="PS00082">
    <property type="entry name" value="EXTRADIOL_DIOXYGENAS"/>
    <property type="match status" value="1"/>
</dbReference>
<dbReference type="PROSITE" id="PS51819">
    <property type="entry name" value="VOC"/>
    <property type="match status" value="2"/>
</dbReference>
<proteinExistence type="evidence at protein level"/>
<protein>
    <recommendedName>
        <fullName>2,2',3-trihydroxybiphenyl dioxygenase</fullName>
        <ecNumber>1.13.11.-</ecNumber>
    </recommendedName>
</protein>
<evidence type="ECO:0000250" key="1"/>
<evidence type="ECO:0000255" key="2">
    <source>
        <dbReference type="PROSITE-ProRule" id="PRU01163"/>
    </source>
</evidence>
<evidence type="ECO:0000269" key="3">
    <source>
    </source>
</evidence>
<evidence type="ECO:0000305" key="4"/>
<accession>P47243</accession>
<organism>
    <name type="scientific">Sphingomonas paucimobilis</name>
    <name type="common">Pseudomonas paucimobilis</name>
    <dbReference type="NCBI Taxonomy" id="13689"/>
    <lineage>
        <taxon>Bacteria</taxon>
        <taxon>Pseudomonadati</taxon>
        <taxon>Pseudomonadota</taxon>
        <taxon>Alphaproteobacteria</taxon>
        <taxon>Sphingomonadales</taxon>
        <taxon>Sphingomonadaceae</taxon>
        <taxon>Sphingomonas</taxon>
    </lineage>
</organism>
<sequence length="294" mass="32278">MSVKQLGYLIFECRADVLEQMVVVYQDIIGAVVERDEGGRALVRLDGRPFRIRLDPGPANRLAAIGWNVDPSDLAAIAEQVEKACYSVVTADAELAADRAAAQVRQFADNDGFTHELYVESSFPTDPVLESLFVCGEEANGIFGLGHLVVIVADRAKTQSFFTDVLGFGLSDRVTWPEADIFFLHCNQRHHTVALSAPALGLKPGMVHHLMLEAKSKEQVDRAFAAVKRLGYDVLMTIGQHSNDKVYSFYMMAPAGFAVELGFGGQVIGDLESWHVGFYDAPSIWGHELQLPAH</sequence>
<gene>
    <name type="primary">dbfB</name>
</gene>
<reference key="1">
    <citation type="journal article" date="1993" name="J. Bacteriol.">
        <title>Characterization of 2,2',3-trihydroxybiphenyl dioxygenase, an extradiol dioxygenase from the dibenzofuran- and dibenzo-p-dioxin-degrading bacterium Sphingomonas sp. strain RW1.</title>
        <authorList>
            <person name="Happe B."/>
            <person name="Eltis L.D."/>
            <person name="Poth H."/>
            <person name="Hedderich R."/>
            <person name="Timmis K.N."/>
        </authorList>
    </citation>
    <scope>NUCLEOTIDE SEQUENCE [GENOMIC DNA]</scope>
    <scope>PROTEIN SEQUENCE OF 2-64</scope>
    <source>
        <strain>RW1</strain>
    </source>
</reference>
<reference key="2">
    <citation type="submission" date="1998-12" db="EMBL/GenBank/DDBJ databases">
        <authorList>
            <person name="Armengaud J."/>
        </authorList>
    </citation>
    <scope>SEQUENCE REVISION</scope>
</reference>